<accession>P86755</accession>
<reference evidence="9" key="1">
    <citation type="journal article" date="2010" name="J. Proteome Res.">
        <title>Extensive de novo sequencing of new parvalbumin isoforms using a novel combination of bottom-up proteomics, accurate molecular mass measurement by FTICR-MS, and selected MS/MS ion monitoring.</title>
        <authorList>
            <person name="Carrera M."/>
            <person name="Canas B."/>
            <person name="Vazquez J."/>
            <person name="Gallardo J.M."/>
        </authorList>
    </citation>
    <scope>PROTEIN SEQUENCE</scope>
    <scope>ACETYLATION AT ALA-1</scope>
    <source>
        <tissue evidence="7">Muscle</tissue>
    </source>
</reference>
<proteinExistence type="evidence at protein level"/>
<name>PRVB3_MERCP</name>
<feature type="chain" id="PRO_0000399417" description="Parvalbumin beta 3">
    <location>
        <begin position="1"/>
        <end position="58" status="greater than"/>
    </location>
</feature>
<feature type="domain" description="EF-hand" evidence="5">
    <location>
        <begin position="24"/>
        <end position="58"/>
    </location>
</feature>
<feature type="binding site" evidence="6">
    <location>
        <position position="37"/>
    </location>
    <ligand>
        <name>Ca(2+)</name>
        <dbReference type="ChEBI" id="CHEBI:29108"/>
    </ligand>
</feature>
<feature type="binding site" evidence="6">
    <location>
        <position position="39"/>
    </location>
    <ligand>
        <name>Ca(2+)</name>
        <dbReference type="ChEBI" id="CHEBI:29108"/>
    </ligand>
</feature>
<feature type="binding site" evidence="6">
    <location>
        <position position="41"/>
    </location>
    <ligand>
        <name>Ca(2+)</name>
        <dbReference type="ChEBI" id="CHEBI:29108"/>
    </ligand>
</feature>
<feature type="binding site" evidence="6">
    <location>
        <position position="43"/>
    </location>
    <ligand>
        <name>Ca(2+)</name>
        <dbReference type="ChEBI" id="CHEBI:29108"/>
    </ligand>
</feature>
<feature type="binding site" evidence="1">
    <location>
        <position position="45"/>
    </location>
    <ligand>
        <name>Ca(2+)</name>
        <dbReference type="ChEBI" id="CHEBI:29108"/>
        <label>1</label>
    </ligand>
</feature>
<feature type="binding site" evidence="6">
    <location>
        <position position="48"/>
    </location>
    <ligand>
        <name>Ca(2+)</name>
        <dbReference type="ChEBI" id="CHEBI:29108"/>
    </ligand>
</feature>
<feature type="modified residue" description="N-acetylalanine" evidence="7">
    <location>
        <position position="1"/>
    </location>
</feature>
<feature type="unsure residue" description="L or I" evidence="7">
    <location>
        <position position="6"/>
    </location>
</feature>
<feature type="unsure residue" description="I or L" evidence="7">
    <location>
        <position position="11"/>
    </location>
</feature>
<feature type="unsure residue" description="K or Q" evidence="7">
    <location>
        <position position="12"/>
    </location>
</feature>
<feature type="unsure residue" description="L or I" evidence="7">
    <location>
        <position position="15"/>
    </location>
</feature>
<feature type="unsure residue" description="K or Q" evidence="7">
    <location>
        <position position="27"/>
    </location>
</feature>
<feature type="unsure residue" description="K or Q" evidence="7">
    <location>
        <position position="31"/>
    </location>
</feature>
<feature type="unsure residue" description="I or L" evidence="7">
    <location>
        <position position="35"/>
    </location>
</feature>
<feature type="unsure residue" description="I or L" evidence="7">
    <location>
        <position position="36"/>
    </location>
</feature>
<feature type="unsure residue" description="Q or K" evidence="7">
    <location>
        <position position="38"/>
    </location>
</feature>
<feature type="unsure residue" description="I or L" evidence="7">
    <location>
        <position position="44"/>
    </location>
</feature>
<feature type="unsure residue" description="L or I" evidence="7">
    <location>
        <position position="49"/>
    </location>
</feature>
<feature type="unsure residue" description="K or Q" evidence="7">
    <location>
        <position position="50"/>
    </location>
</feature>
<feature type="unsure residue" description="L or I" evidence="7">
    <location>
        <position position="52"/>
    </location>
</feature>
<feature type="unsure residue" description="K or Q" evidence="7">
    <location>
        <position position="58"/>
    </location>
</feature>
<feature type="non-consecutive residues" evidence="8">
    <location>
        <begin position="31"/>
        <end position="32"/>
    </location>
</feature>
<feature type="non-consecutive residues" evidence="8">
    <location>
        <begin position="51"/>
        <end position="52"/>
    </location>
</feature>
<feature type="non-terminal residue" evidence="8">
    <location>
        <position position="58"/>
    </location>
</feature>
<keyword id="KW-0007">Acetylation</keyword>
<keyword id="KW-0020">Allergen</keyword>
<keyword id="KW-0106">Calcium</keyword>
<keyword id="KW-0903">Direct protein sequencing</keyword>
<keyword id="KW-0479">Metal-binding</keyword>
<keyword id="KW-0514">Muscle protein</keyword>
<comment type="function">
    <text evidence="2 3">In muscle, parvalbumin is thought to be involved in relaxation after contraction. It binds two calcium ions (By similarity).</text>
</comment>
<comment type="miscellaneous">
    <text evidence="2 7">Is regarded as an important allergen.</text>
</comment>
<comment type="miscellaneous">
    <text evidence="7">On the 2D-gel the determined pI of this protein is: 3.95, its MW is: 11.39 kDa.</text>
</comment>
<comment type="similarity">
    <text evidence="4">Belongs to the parvalbumin family.</text>
</comment>
<sequence length="58" mass="6248">AFAGVLADADIKAALAGCAAAESFNYKTFFKFFAIIDQDHSGFIEEEELKALSDAETK</sequence>
<organism>
    <name type="scientific">Merluccius capensis</name>
    <name type="common">Shallow-water Cape hake</name>
    <name type="synonym">Gadus merluccius</name>
    <dbReference type="NCBI Taxonomy" id="89947"/>
    <lineage>
        <taxon>Eukaryota</taxon>
        <taxon>Metazoa</taxon>
        <taxon>Chordata</taxon>
        <taxon>Craniata</taxon>
        <taxon>Vertebrata</taxon>
        <taxon>Euteleostomi</taxon>
        <taxon>Actinopterygii</taxon>
        <taxon>Neopterygii</taxon>
        <taxon>Teleostei</taxon>
        <taxon>Neoteleostei</taxon>
        <taxon>Acanthomorphata</taxon>
        <taxon>Zeiogadaria</taxon>
        <taxon>Gadariae</taxon>
        <taxon>Gadiformes</taxon>
        <taxon>Gadoidei</taxon>
        <taxon>Merlucciidae</taxon>
        <taxon>Merluccius</taxon>
    </lineage>
</organism>
<evidence type="ECO:0000250" key="1">
    <source>
        <dbReference type="UniProtKB" id="P02621"/>
    </source>
</evidence>
<evidence type="ECO:0000250" key="2">
    <source>
        <dbReference type="UniProtKB" id="P02622"/>
    </source>
</evidence>
<evidence type="ECO:0000250" key="3">
    <source>
        <dbReference type="UniProtKB" id="P02624"/>
    </source>
</evidence>
<evidence type="ECO:0000255" key="4"/>
<evidence type="ECO:0000255" key="5">
    <source>
        <dbReference type="PROSITE-ProRule" id="PRU00448"/>
    </source>
</evidence>
<evidence type="ECO:0000255" key="6">
    <source>
        <dbReference type="PROSITE-ProRule" id="PRU10142"/>
    </source>
</evidence>
<evidence type="ECO:0000269" key="7">
    <source>
    </source>
</evidence>
<evidence type="ECO:0000303" key="8">
    <source>
    </source>
</evidence>
<evidence type="ECO:0000305" key="9"/>
<protein>
    <recommendedName>
        <fullName evidence="8">Parvalbumin beta 3</fullName>
    </recommendedName>
</protein>
<dbReference type="SMR" id="P86755"/>
<dbReference type="Allergome" id="7645">
    <property type="allergen name" value="Mer ca 1"/>
</dbReference>
<dbReference type="iPTMnet" id="P86755"/>
<dbReference type="GO" id="GO:0005737">
    <property type="term" value="C:cytoplasm"/>
    <property type="evidence" value="ECO:0007669"/>
    <property type="project" value="TreeGrafter"/>
</dbReference>
<dbReference type="GO" id="GO:0005509">
    <property type="term" value="F:calcium ion binding"/>
    <property type="evidence" value="ECO:0007669"/>
    <property type="project" value="InterPro"/>
</dbReference>
<dbReference type="Gene3D" id="1.10.238.10">
    <property type="entry name" value="EF-hand"/>
    <property type="match status" value="1"/>
</dbReference>
<dbReference type="InterPro" id="IPR011992">
    <property type="entry name" value="EF-hand-dom_pair"/>
</dbReference>
<dbReference type="InterPro" id="IPR018247">
    <property type="entry name" value="EF_Hand_1_Ca_BS"/>
</dbReference>
<dbReference type="InterPro" id="IPR008080">
    <property type="entry name" value="Parvalbumin"/>
</dbReference>
<dbReference type="PANTHER" id="PTHR11653:SF12">
    <property type="entry name" value="PARVALBUMIN"/>
    <property type="match status" value="1"/>
</dbReference>
<dbReference type="PANTHER" id="PTHR11653">
    <property type="entry name" value="PARVALBUMIN ALPHA"/>
    <property type="match status" value="1"/>
</dbReference>
<dbReference type="SUPFAM" id="SSF47473">
    <property type="entry name" value="EF-hand"/>
    <property type="match status" value="1"/>
</dbReference>
<dbReference type="PROSITE" id="PS00018">
    <property type="entry name" value="EF_HAND_1"/>
    <property type="match status" value="1"/>
</dbReference>